<reference key="1">
    <citation type="submission" date="2007-07" db="EMBL/GenBank/DDBJ databases">
        <title>Complete sequence of chromosome of Shewanella baltica OS185.</title>
        <authorList>
            <consortium name="US DOE Joint Genome Institute"/>
            <person name="Copeland A."/>
            <person name="Lucas S."/>
            <person name="Lapidus A."/>
            <person name="Barry K."/>
            <person name="Glavina del Rio T."/>
            <person name="Dalin E."/>
            <person name="Tice H."/>
            <person name="Pitluck S."/>
            <person name="Sims D."/>
            <person name="Brettin T."/>
            <person name="Bruce D."/>
            <person name="Detter J.C."/>
            <person name="Han C."/>
            <person name="Schmutz J."/>
            <person name="Larimer F."/>
            <person name="Land M."/>
            <person name="Hauser L."/>
            <person name="Kyrpides N."/>
            <person name="Mikhailova N."/>
            <person name="Brettar I."/>
            <person name="Rodrigues J."/>
            <person name="Konstantinidis K."/>
            <person name="Tiedje J."/>
            <person name="Richardson P."/>
        </authorList>
    </citation>
    <scope>NUCLEOTIDE SEQUENCE [LARGE SCALE GENOMIC DNA]</scope>
    <source>
        <strain>OS185</strain>
    </source>
</reference>
<sequence>MPRVKRGVTARARHKKVLKLAKGYYGARSRTYRVAVQAVTKAGQYAYRDRRQKKRQFRQLWIARINAAARQNGLSYSRFINGLKKASIEIDRKILADIAVFDKVVFATLVEKAKEALN</sequence>
<proteinExistence type="inferred from homology"/>
<name>RL20_SHEB8</name>
<feature type="chain" id="PRO_1000049065" description="Large ribosomal subunit protein bL20">
    <location>
        <begin position="1"/>
        <end position="118"/>
    </location>
</feature>
<comment type="function">
    <text evidence="1">Binds directly to 23S ribosomal RNA and is necessary for the in vitro assembly process of the 50S ribosomal subunit. It is not involved in the protein synthesizing functions of that subunit.</text>
</comment>
<comment type="similarity">
    <text evidence="1">Belongs to the bacterial ribosomal protein bL20 family.</text>
</comment>
<gene>
    <name evidence="1" type="primary">rplT</name>
    <name type="ordered locus">Shew185_2219</name>
</gene>
<evidence type="ECO:0000255" key="1">
    <source>
        <dbReference type="HAMAP-Rule" id="MF_00382"/>
    </source>
</evidence>
<evidence type="ECO:0000305" key="2"/>
<keyword id="KW-0687">Ribonucleoprotein</keyword>
<keyword id="KW-0689">Ribosomal protein</keyword>
<keyword id="KW-0694">RNA-binding</keyword>
<keyword id="KW-0699">rRNA-binding</keyword>
<organism>
    <name type="scientific">Shewanella baltica (strain OS185)</name>
    <dbReference type="NCBI Taxonomy" id="402882"/>
    <lineage>
        <taxon>Bacteria</taxon>
        <taxon>Pseudomonadati</taxon>
        <taxon>Pseudomonadota</taxon>
        <taxon>Gammaproteobacteria</taxon>
        <taxon>Alteromonadales</taxon>
        <taxon>Shewanellaceae</taxon>
        <taxon>Shewanella</taxon>
    </lineage>
</organism>
<protein>
    <recommendedName>
        <fullName evidence="1">Large ribosomal subunit protein bL20</fullName>
    </recommendedName>
    <alternativeName>
        <fullName evidence="2">50S ribosomal protein L20</fullName>
    </alternativeName>
</protein>
<dbReference type="EMBL" id="CP000753">
    <property type="protein sequence ID" value="ABS08358.1"/>
    <property type="molecule type" value="Genomic_DNA"/>
</dbReference>
<dbReference type="RefSeq" id="WP_006081652.1">
    <property type="nucleotide sequence ID" value="NC_009665.1"/>
</dbReference>
<dbReference type="SMR" id="A6WNG9"/>
<dbReference type="GeneID" id="94727990"/>
<dbReference type="KEGG" id="sbm:Shew185_2219"/>
<dbReference type="HOGENOM" id="CLU_123265_0_1_6"/>
<dbReference type="GO" id="GO:1990904">
    <property type="term" value="C:ribonucleoprotein complex"/>
    <property type="evidence" value="ECO:0007669"/>
    <property type="project" value="UniProtKB-KW"/>
</dbReference>
<dbReference type="GO" id="GO:0005840">
    <property type="term" value="C:ribosome"/>
    <property type="evidence" value="ECO:0007669"/>
    <property type="project" value="UniProtKB-KW"/>
</dbReference>
<dbReference type="GO" id="GO:0019843">
    <property type="term" value="F:rRNA binding"/>
    <property type="evidence" value="ECO:0007669"/>
    <property type="project" value="UniProtKB-UniRule"/>
</dbReference>
<dbReference type="GO" id="GO:0003735">
    <property type="term" value="F:structural constituent of ribosome"/>
    <property type="evidence" value="ECO:0007669"/>
    <property type="project" value="InterPro"/>
</dbReference>
<dbReference type="GO" id="GO:0000027">
    <property type="term" value="P:ribosomal large subunit assembly"/>
    <property type="evidence" value="ECO:0007669"/>
    <property type="project" value="UniProtKB-UniRule"/>
</dbReference>
<dbReference type="GO" id="GO:0006412">
    <property type="term" value="P:translation"/>
    <property type="evidence" value="ECO:0007669"/>
    <property type="project" value="InterPro"/>
</dbReference>
<dbReference type="CDD" id="cd07026">
    <property type="entry name" value="Ribosomal_L20"/>
    <property type="match status" value="1"/>
</dbReference>
<dbReference type="FunFam" id="1.10.1900.20:FF:000001">
    <property type="entry name" value="50S ribosomal protein L20"/>
    <property type="match status" value="1"/>
</dbReference>
<dbReference type="Gene3D" id="6.10.160.10">
    <property type="match status" value="1"/>
</dbReference>
<dbReference type="Gene3D" id="1.10.1900.20">
    <property type="entry name" value="Ribosomal protein L20"/>
    <property type="match status" value="1"/>
</dbReference>
<dbReference type="HAMAP" id="MF_00382">
    <property type="entry name" value="Ribosomal_bL20"/>
    <property type="match status" value="1"/>
</dbReference>
<dbReference type="InterPro" id="IPR005813">
    <property type="entry name" value="Ribosomal_bL20"/>
</dbReference>
<dbReference type="InterPro" id="IPR049946">
    <property type="entry name" value="RIBOSOMAL_L20_CS"/>
</dbReference>
<dbReference type="InterPro" id="IPR035566">
    <property type="entry name" value="Ribosomal_protein_bL20_C"/>
</dbReference>
<dbReference type="NCBIfam" id="TIGR01032">
    <property type="entry name" value="rplT_bact"/>
    <property type="match status" value="1"/>
</dbReference>
<dbReference type="PANTHER" id="PTHR10986">
    <property type="entry name" value="39S RIBOSOMAL PROTEIN L20"/>
    <property type="match status" value="1"/>
</dbReference>
<dbReference type="Pfam" id="PF00453">
    <property type="entry name" value="Ribosomal_L20"/>
    <property type="match status" value="1"/>
</dbReference>
<dbReference type="PRINTS" id="PR00062">
    <property type="entry name" value="RIBOSOMALL20"/>
</dbReference>
<dbReference type="SUPFAM" id="SSF74731">
    <property type="entry name" value="Ribosomal protein L20"/>
    <property type="match status" value="1"/>
</dbReference>
<dbReference type="PROSITE" id="PS00937">
    <property type="entry name" value="RIBOSOMAL_L20"/>
    <property type="match status" value="1"/>
</dbReference>
<accession>A6WNG9</accession>